<reference key="1">
    <citation type="journal article" date="2005" name="Science">
        <title>The transcriptional landscape of the mammalian genome.</title>
        <authorList>
            <person name="Carninci P."/>
            <person name="Kasukawa T."/>
            <person name="Katayama S."/>
            <person name="Gough J."/>
            <person name="Frith M.C."/>
            <person name="Maeda N."/>
            <person name="Oyama R."/>
            <person name="Ravasi T."/>
            <person name="Lenhard B."/>
            <person name="Wells C."/>
            <person name="Kodzius R."/>
            <person name="Shimokawa K."/>
            <person name="Bajic V.B."/>
            <person name="Brenner S.E."/>
            <person name="Batalov S."/>
            <person name="Forrest A.R."/>
            <person name="Zavolan M."/>
            <person name="Davis M.J."/>
            <person name="Wilming L.G."/>
            <person name="Aidinis V."/>
            <person name="Allen J.E."/>
            <person name="Ambesi-Impiombato A."/>
            <person name="Apweiler R."/>
            <person name="Aturaliya R.N."/>
            <person name="Bailey T.L."/>
            <person name="Bansal M."/>
            <person name="Baxter L."/>
            <person name="Beisel K.W."/>
            <person name="Bersano T."/>
            <person name="Bono H."/>
            <person name="Chalk A.M."/>
            <person name="Chiu K.P."/>
            <person name="Choudhary V."/>
            <person name="Christoffels A."/>
            <person name="Clutterbuck D.R."/>
            <person name="Crowe M.L."/>
            <person name="Dalla E."/>
            <person name="Dalrymple B.P."/>
            <person name="de Bono B."/>
            <person name="Della Gatta G."/>
            <person name="di Bernardo D."/>
            <person name="Down T."/>
            <person name="Engstrom P."/>
            <person name="Fagiolini M."/>
            <person name="Faulkner G."/>
            <person name="Fletcher C.F."/>
            <person name="Fukushima T."/>
            <person name="Furuno M."/>
            <person name="Futaki S."/>
            <person name="Gariboldi M."/>
            <person name="Georgii-Hemming P."/>
            <person name="Gingeras T.R."/>
            <person name="Gojobori T."/>
            <person name="Green R.E."/>
            <person name="Gustincich S."/>
            <person name="Harbers M."/>
            <person name="Hayashi Y."/>
            <person name="Hensch T.K."/>
            <person name="Hirokawa N."/>
            <person name="Hill D."/>
            <person name="Huminiecki L."/>
            <person name="Iacono M."/>
            <person name="Ikeo K."/>
            <person name="Iwama A."/>
            <person name="Ishikawa T."/>
            <person name="Jakt M."/>
            <person name="Kanapin A."/>
            <person name="Katoh M."/>
            <person name="Kawasawa Y."/>
            <person name="Kelso J."/>
            <person name="Kitamura H."/>
            <person name="Kitano H."/>
            <person name="Kollias G."/>
            <person name="Krishnan S.P."/>
            <person name="Kruger A."/>
            <person name="Kummerfeld S.K."/>
            <person name="Kurochkin I.V."/>
            <person name="Lareau L.F."/>
            <person name="Lazarevic D."/>
            <person name="Lipovich L."/>
            <person name="Liu J."/>
            <person name="Liuni S."/>
            <person name="McWilliam S."/>
            <person name="Madan Babu M."/>
            <person name="Madera M."/>
            <person name="Marchionni L."/>
            <person name="Matsuda H."/>
            <person name="Matsuzawa S."/>
            <person name="Miki H."/>
            <person name="Mignone F."/>
            <person name="Miyake S."/>
            <person name="Morris K."/>
            <person name="Mottagui-Tabar S."/>
            <person name="Mulder N."/>
            <person name="Nakano N."/>
            <person name="Nakauchi H."/>
            <person name="Ng P."/>
            <person name="Nilsson R."/>
            <person name="Nishiguchi S."/>
            <person name="Nishikawa S."/>
            <person name="Nori F."/>
            <person name="Ohara O."/>
            <person name="Okazaki Y."/>
            <person name="Orlando V."/>
            <person name="Pang K.C."/>
            <person name="Pavan W.J."/>
            <person name="Pavesi G."/>
            <person name="Pesole G."/>
            <person name="Petrovsky N."/>
            <person name="Piazza S."/>
            <person name="Reed J."/>
            <person name="Reid J.F."/>
            <person name="Ring B.Z."/>
            <person name="Ringwald M."/>
            <person name="Rost B."/>
            <person name="Ruan Y."/>
            <person name="Salzberg S.L."/>
            <person name="Sandelin A."/>
            <person name="Schneider C."/>
            <person name="Schoenbach C."/>
            <person name="Sekiguchi K."/>
            <person name="Semple C.A."/>
            <person name="Seno S."/>
            <person name="Sessa L."/>
            <person name="Sheng Y."/>
            <person name="Shibata Y."/>
            <person name="Shimada H."/>
            <person name="Shimada K."/>
            <person name="Silva D."/>
            <person name="Sinclair B."/>
            <person name="Sperling S."/>
            <person name="Stupka E."/>
            <person name="Sugiura K."/>
            <person name="Sultana R."/>
            <person name="Takenaka Y."/>
            <person name="Taki K."/>
            <person name="Tammoja K."/>
            <person name="Tan S.L."/>
            <person name="Tang S."/>
            <person name="Taylor M.S."/>
            <person name="Tegner J."/>
            <person name="Teichmann S.A."/>
            <person name="Ueda H.R."/>
            <person name="van Nimwegen E."/>
            <person name="Verardo R."/>
            <person name="Wei C.L."/>
            <person name="Yagi K."/>
            <person name="Yamanishi H."/>
            <person name="Zabarovsky E."/>
            <person name="Zhu S."/>
            <person name="Zimmer A."/>
            <person name="Hide W."/>
            <person name="Bult C."/>
            <person name="Grimmond S.M."/>
            <person name="Teasdale R.D."/>
            <person name="Liu E.T."/>
            <person name="Brusic V."/>
            <person name="Quackenbush J."/>
            <person name="Wahlestedt C."/>
            <person name="Mattick J.S."/>
            <person name="Hume D.A."/>
            <person name="Kai C."/>
            <person name="Sasaki D."/>
            <person name="Tomaru Y."/>
            <person name="Fukuda S."/>
            <person name="Kanamori-Katayama M."/>
            <person name="Suzuki M."/>
            <person name="Aoki J."/>
            <person name="Arakawa T."/>
            <person name="Iida J."/>
            <person name="Imamura K."/>
            <person name="Itoh M."/>
            <person name="Kato T."/>
            <person name="Kawaji H."/>
            <person name="Kawagashira N."/>
            <person name="Kawashima T."/>
            <person name="Kojima M."/>
            <person name="Kondo S."/>
            <person name="Konno H."/>
            <person name="Nakano K."/>
            <person name="Ninomiya N."/>
            <person name="Nishio T."/>
            <person name="Okada M."/>
            <person name="Plessy C."/>
            <person name="Shibata K."/>
            <person name="Shiraki T."/>
            <person name="Suzuki S."/>
            <person name="Tagami M."/>
            <person name="Waki K."/>
            <person name="Watahiki A."/>
            <person name="Okamura-Oho Y."/>
            <person name="Suzuki H."/>
            <person name="Kawai J."/>
            <person name="Hayashizaki Y."/>
        </authorList>
    </citation>
    <scope>NUCLEOTIDE SEQUENCE [LARGE SCALE MRNA]</scope>
    <source>
        <strain>C57BL/6J</strain>
        <tissue>Eye</tissue>
    </source>
</reference>
<reference key="2">
    <citation type="journal article" date="2008" name="Invest. Ophthalmol. Vis. Sci.">
        <title>Mutation in a novel connexin-like gene (Gjf1) in the mouse affects early lens development and causes a variable small-eye phenotype.</title>
        <authorList>
            <person name="Puk O."/>
            <person name="Loester J."/>
            <person name="Dalke C."/>
            <person name="Soewarto D."/>
            <person name="Fuchs H."/>
            <person name="Budde B."/>
            <person name="Nuernberg P."/>
            <person name="Wolf E."/>
            <person name="de Angelis M.H."/>
            <person name="Graw J."/>
        </authorList>
    </citation>
    <scope>FUNCTION</scope>
    <scope>TISSUE SPECIFICITY</scope>
    <scope>DEVELOPMENTAL STAGE</scope>
    <scope>MUTAGENESIS OF ARG-32</scope>
</reference>
<reference key="3">
    <citation type="journal article" date="2009" name="Eur. J. Cell Biol.">
        <title>Mouse lens connexin23 (Gje1) does not form functional gap junction channels but causes enhanced ATP release from HeLa cells.</title>
        <authorList>
            <person name="Sonntag S."/>
            <person name="Soehl G."/>
            <person name="Dobrowolski R."/>
            <person name="Zhang J."/>
            <person name="Theis M."/>
            <person name="Winterhager E."/>
            <person name="Bukauskas F.F."/>
            <person name="Willecke K."/>
        </authorList>
    </citation>
    <scope>FUNCTION</scope>
    <scope>SUBCELLULAR LOCATION</scope>
    <scope>TISSUE SPECIFICITY</scope>
</reference>
<reference key="4">
    <citation type="journal article" date="2016" name="Exp. Eye Res.">
        <title>Connexin23 deletion does not affect lens transparency.</title>
        <authorList>
            <person name="Berthoud V.M."/>
            <person name="Minogue P.J."/>
            <person name="Snabb J.I."/>
            <person name="Dzhashiashvili Y."/>
            <person name="Novak L.A."/>
            <person name="Zoltoski R.K."/>
            <person name="Popko B."/>
            <person name="Beyer E.C."/>
        </authorList>
    </citation>
    <scope>FUNCTION</scope>
    <scope>DISRUPTION PHENOTYPE</scope>
</reference>
<organism>
    <name type="scientific">Mus musculus</name>
    <name type="common">Mouse</name>
    <dbReference type="NCBI Taxonomy" id="10090"/>
    <lineage>
        <taxon>Eukaryota</taxon>
        <taxon>Metazoa</taxon>
        <taxon>Chordata</taxon>
        <taxon>Craniata</taxon>
        <taxon>Vertebrata</taxon>
        <taxon>Euteleostomi</taxon>
        <taxon>Mammalia</taxon>
        <taxon>Eutheria</taxon>
        <taxon>Euarchontoglires</taxon>
        <taxon>Glires</taxon>
        <taxon>Rodentia</taxon>
        <taxon>Myomorpha</taxon>
        <taxon>Muroidea</taxon>
        <taxon>Muridae</taxon>
        <taxon>Murinae</taxon>
        <taxon>Mus</taxon>
        <taxon>Mus</taxon>
    </lineage>
</organism>
<feature type="chain" id="PRO_0000317612" description="Gap junction epsilon-1 protein">
    <location>
        <begin position="1"/>
        <end position="205"/>
    </location>
</feature>
<feature type="topological domain" description="Cytoplasmic" evidence="3">
    <location>
        <begin position="1"/>
        <end position="22"/>
    </location>
</feature>
<feature type="transmembrane region" description="Helical" evidence="3">
    <location>
        <begin position="23"/>
        <end position="43"/>
    </location>
</feature>
<feature type="topological domain" description="Extracellular" evidence="3">
    <location>
        <begin position="44"/>
        <end position="74"/>
    </location>
</feature>
<feature type="transmembrane region" description="Helical" evidence="3">
    <location>
        <begin position="75"/>
        <end position="95"/>
    </location>
</feature>
<feature type="topological domain" description="Cytoplasmic" evidence="3">
    <location>
        <begin position="96"/>
        <end position="111"/>
    </location>
</feature>
<feature type="transmembrane region" description="Helical" evidence="3">
    <location>
        <begin position="112"/>
        <end position="132"/>
    </location>
</feature>
<feature type="topological domain" description="Extracellular" evidence="3">
    <location>
        <begin position="133"/>
        <end position="170"/>
    </location>
</feature>
<feature type="transmembrane region" description="Helical" evidence="3">
    <location>
        <begin position="171"/>
        <end position="191"/>
    </location>
</feature>
<feature type="topological domain" description="Cytoplasmic" evidence="3">
    <location>
        <begin position="192"/>
        <end position="205"/>
    </location>
</feature>
<feature type="disulfide bond" evidence="2">
    <location>
        <begin position="53"/>
        <end position="161"/>
    </location>
</feature>
<feature type="disulfide bond" evidence="2">
    <location>
        <begin position="64"/>
        <end position="147"/>
    </location>
</feature>
<feature type="mutagenesis site" description="In Aey12; dominant negative mutation. Viable and fertile with a small eye phenotype. The lens is absent and only the lens envelope remains. The retina is misfolded and poorly differentiated. Heterozygotes show variable degrees of lens opacity and abnormal primary lens fiber elongation. Defects are apparent from embryonic stage 12.5 dpc onwards." evidence="4">
    <original>R</original>
    <variation>Q</variation>
    <location>
        <position position="32"/>
    </location>
</feature>
<proteinExistence type="evidence at protein level"/>
<sequence length="205" mass="23831">MSLNYIKNFYEGCVKPPTVIGQFHTLFFGSVRMFFLGVLGFAVYGNEALHFSCDPDKREINLFCYNQFRPITPQVFWALQLVIVLLPGAIFHLYAACKSINQDCILQKPVYTVIYVLSVLLRISLEVFAFWLQIHLFGFQVKPIYLCDTESLGKKPNILKCMVPEHFEKTIFLIAMYTFTVITMVLCVAEVFEIIFRRSCFLFKR</sequence>
<evidence type="ECO:0000250" key="1">
    <source>
        <dbReference type="UniProtKB" id="P08050"/>
    </source>
</evidence>
<evidence type="ECO:0000250" key="2">
    <source>
        <dbReference type="UniProtKB" id="P29033"/>
    </source>
</evidence>
<evidence type="ECO:0000255" key="3"/>
<evidence type="ECO:0000269" key="4">
    <source>
    </source>
</evidence>
<evidence type="ECO:0000269" key="5">
    <source>
    </source>
</evidence>
<evidence type="ECO:0000269" key="6">
    <source>
    </source>
</evidence>
<evidence type="ECO:0000303" key="7">
    <source>
    </source>
</evidence>
<evidence type="ECO:0000303" key="8">
    <source>
    </source>
</evidence>
<evidence type="ECO:0000305" key="9"/>
<evidence type="ECO:0000312" key="10">
    <source>
        <dbReference type="MGI" id="MGI:1923993"/>
    </source>
</evidence>
<keyword id="KW-1003">Cell membrane</keyword>
<keyword id="KW-0217">Developmental protein</keyword>
<keyword id="KW-1015">Disulfide bond</keyword>
<keyword id="KW-0472">Membrane</keyword>
<keyword id="KW-1185">Reference proteome</keyword>
<keyword id="KW-0812">Transmembrane</keyword>
<keyword id="KW-1133">Transmembrane helix</keyword>
<keyword id="KW-0813">Transport</keyword>
<protein>
    <recommendedName>
        <fullName evidence="10">Gap junction epsilon-1 protein</fullName>
    </recommendedName>
    <alternativeName>
        <fullName evidence="8">Connexin-23</fullName>
        <shortName evidence="8">Cx23</shortName>
    </alternativeName>
</protein>
<comment type="function">
    <text evidence="4 6">Mediates calcium-independent ATP release, suggesting activity as a hemichannel (PubMed:18849090). Does not form functional gap junctions (PubMed:18849090). May play a non-essential role in eye lens development (PubMed:18385072, PubMed:27038752).</text>
</comment>
<comment type="subunit">
    <text evidence="1">A connexon is composed of a hexamer of connexins.</text>
</comment>
<comment type="subcellular location">
    <subcellularLocation>
        <location evidence="5">Cell membrane</location>
        <topology evidence="3">Multi-pass membrane protein</topology>
    </subcellularLocation>
</comment>
<comment type="tissue specificity">
    <text evidence="4 5">Highly expressed in lens, where it is mainly found in lens fibers and to a lesser extent in lens epithelium (PubMed:18385072, PubMed:18849090). Weakly expressed in retina (PubMed:18849090). Not detected in other tissues tested (PubMed:18385072, PubMed:18849090).</text>
</comment>
<comment type="developmental stage">
    <text evidence="4">Expressed at the posterior region of the lens vesicle at embryonic stage 11.5 dpc. Detected at the tip of elongating lens fiber cells at stage 12.5 dpc. Expressed in lens epithelial cells, and weakly in retina, at stage 15.5 dpc.</text>
</comment>
<comment type="disruption phenotype">
    <text evidence="6">No visible phenotype. Eye morphology appears to be normal with no significant effects on lens transparency and refraction. Expression levels of the connexins Cx46 and Cx50 in lens tissue are slightly reduced.</text>
</comment>
<comment type="similarity">
    <text evidence="9">Belongs to the connexin family. Beta-type (group I) subfamily.</text>
</comment>
<dbReference type="EMBL" id="AK018698">
    <property type="protein sequence ID" value="BAB31350.1"/>
    <property type="molecule type" value="mRNA"/>
</dbReference>
<dbReference type="CCDS" id="CCDS48505.1"/>
<dbReference type="RefSeq" id="NP_083998.1">
    <property type="nucleotide sequence ID" value="NM_029722.3"/>
</dbReference>
<dbReference type="SMR" id="Q9CX92"/>
<dbReference type="FunCoup" id="Q9CX92">
    <property type="interactions" value="7"/>
</dbReference>
<dbReference type="STRING" id="10090.ENSMUSP00000020016"/>
<dbReference type="TCDB" id="1.A.24.1.9">
    <property type="family name" value="the gap junction-forming connexin (connexin) family"/>
</dbReference>
<dbReference type="PaxDb" id="10090-ENSMUSP00000020016"/>
<dbReference type="Antibodypedia" id="8535">
    <property type="antibodies" value="27 antibodies from 9 providers"/>
</dbReference>
<dbReference type="Ensembl" id="ENSMUST00000020016.5">
    <property type="protein sequence ID" value="ENSMUSP00000020016.5"/>
    <property type="gene ID" value="ENSMUSG00000019867.5"/>
</dbReference>
<dbReference type="GeneID" id="76743"/>
<dbReference type="KEGG" id="mmu:76743"/>
<dbReference type="UCSC" id="uc007elo.1">
    <property type="organism name" value="mouse"/>
</dbReference>
<dbReference type="AGR" id="MGI:1923993"/>
<dbReference type="CTD" id="100126572"/>
<dbReference type="MGI" id="MGI:1923993">
    <property type="gene designation" value="Gje1"/>
</dbReference>
<dbReference type="VEuPathDB" id="HostDB:ENSMUSG00000019867"/>
<dbReference type="eggNOG" id="ENOG502RVMN">
    <property type="taxonomic scope" value="Eukaryota"/>
</dbReference>
<dbReference type="GeneTree" id="ENSGT01130000278343"/>
<dbReference type="HOGENOM" id="CLU_115891_0_0_1"/>
<dbReference type="InParanoid" id="Q9CX92"/>
<dbReference type="OMA" id="WLQIYLF"/>
<dbReference type="OrthoDB" id="8719005at2759"/>
<dbReference type="PhylomeDB" id="Q9CX92"/>
<dbReference type="TreeFam" id="TF329606"/>
<dbReference type="BioGRID-ORCS" id="76743">
    <property type="hits" value="0 hits in 74 CRISPR screens"/>
</dbReference>
<dbReference type="ChiTaRS" id="Gjc3">
    <property type="organism name" value="mouse"/>
</dbReference>
<dbReference type="PRO" id="PR:Q9CX92"/>
<dbReference type="Proteomes" id="UP000000589">
    <property type="component" value="Chromosome 10"/>
</dbReference>
<dbReference type="RNAct" id="Q9CX92">
    <property type="molecule type" value="protein"/>
</dbReference>
<dbReference type="Bgee" id="ENSMUSG00000019867">
    <property type="expression patterns" value="Expressed in lens of camera-type eye and 4 other cell types or tissues"/>
</dbReference>
<dbReference type="GO" id="GO:0005922">
    <property type="term" value="C:connexin complex"/>
    <property type="evidence" value="ECO:0007669"/>
    <property type="project" value="InterPro"/>
</dbReference>
<dbReference type="GO" id="GO:0007154">
    <property type="term" value="P:cell communication"/>
    <property type="evidence" value="ECO:0007669"/>
    <property type="project" value="InterPro"/>
</dbReference>
<dbReference type="GO" id="GO:0000902">
    <property type="term" value="P:cell morphogenesis"/>
    <property type="evidence" value="ECO:0000315"/>
    <property type="project" value="MGI"/>
</dbReference>
<dbReference type="GO" id="GO:0002088">
    <property type="term" value="P:lens development in camera-type eye"/>
    <property type="evidence" value="ECO:0000315"/>
    <property type="project" value="MGI"/>
</dbReference>
<dbReference type="GO" id="GO:0035265">
    <property type="term" value="P:organ growth"/>
    <property type="evidence" value="ECO:0000315"/>
    <property type="project" value="MGI"/>
</dbReference>
<dbReference type="FunFam" id="1.20.1440.80:FF:000004">
    <property type="entry name" value="Gap junction epsilon-1 protein"/>
    <property type="match status" value="1"/>
</dbReference>
<dbReference type="Gene3D" id="1.20.1440.80">
    <property type="entry name" value="Gap junction channel protein cysteine-rich domain"/>
    <property type="match status" value="2"/>
</dbReference>
<dbReference type="InterPro" id="IPR000500">
    <property type="entry name" value="Connexin"/>
</dbReference>
<dbReference type="InterPro" id="IPR019570">
    <property type="entry name" value="Connexin_CCC"/>
</dbReference>
<dbReference type="InterPro" id="IPR013092">
    <property type="entry name" value="Connexin_N"/>
</dbReference>
<dbReference type="InterPro" id="IPR038359">
    <property type="entry name" value="Connexin_N_sf"/>
</dbReference>
<dbReference type="PANTHER" id="PTHR11984">
    <property type="entry name" value="CONNEXIN"/>
    <property type="match status" value="1"/>
</dbReference>
<dbReference type="PANTHER" id="PTHR11984:SF1">
    <property type="entry name" value="GAP JUNCTION EPSILON-1 PROTEIN-RELATED"/>
    <property type="match status" value="1"/>
</dbReference>
<dbReference type="Pfam" id="PF00029">
    <property type="entry name" value="Connexin"/>
    <property type="match status" value="2"/>
</dbReference>
<dbReference type="PRINTS" id="PR00206">
    <property type="entry name" value="CONNEXIN"/>
</dbReference>
<dbReference type="SMART" id="SM01089">
    <property type="entry name" value="Connexin_CCC"/>
    <property type="match status" value="1"/>
</dbReference>
<accession>Q9CX92</accession>
<name>CXE1_MOUSE</name>
<gene>
    <name evidence="8 10" type="primary">Gje1</name>
    <name evidence="8" type="synonym">Cx23</name>
    <name evidence="7" type="synonym">Gjf1</name>
</gene>